<name>RS5_PROM9</name>
<proteinExistence type="inferred from homology"/>
<feature type="chain" id="PRO_0000230357" description="Small ribosomal subunit protein uS5">
    <location>
        <begin position="1"/>
        <end position="207"/>
    </location>
</feature>
<feature type="domain" description="S5 DRBM" evidence="1">
    <location>
        <begin position="51"/>
        <end position="114"/>
    </location>
</feature>
<feature type="region of interest" description="Disordered" evidence="2">
    <location>
        <begin position="1"/>
        <end position="51"/>
    </location>
</feature>
<feature type="compositionally biased region" description="Basic and acidic residues" evidence="2">
    <location>
        <begin position="24"/>
        <end position="51"/>
    </location>
</feature>
<organism>
    <name type="scientific">Prochlorococcus marinus (strain MIT 9312)</name>
    <dbReference type="NCBI Taxonomy" id="74546"/>
    <lineage>
        <taxon>Bacteria</taxon>
        <taxon>Bacillati</taxon>
        <taxon>Cyanobacteriota</taxon>
        <taxon>Cyanophyceae</taxon>
        <taxon>Synechococcales</taxon>
        <taxon>Prochlorococcaceae</taxon>
        <taxon>Prochlorococcus</taxon>
    </lineage>
</organism>
<sequence length="207" mass="22191">MTDTPTKQEITSKNDKVPGAIPGEQKKNNRNNDRKRNRRGDSKNLERDSDWQERVVQIRRVSKTVKGGKKMSFRAIVVVGNEKGQVGVGVGKAGDVIGAVRKGVSDGKKNLVRVPLTPNNSIPTLSKGRDGAANVLIRPAAPGTGVIAGGSIRTVLELAGIKNVLAKRLGSKTPLNNARAAMVALSQLRTHKSASRERGISLEQLYS</sequence>
<dbReference type="EMBL" id="CP000111">
    <property type="protein sequence ID" value="ABB50695.1"/>
    <property type="molecule type" value="Genomic_DNA"/>
</dbReference>
<dbReference type="RefSeq" id="WP_011377177.1">
    <property type="nucleotide sequence ID" value="NC_007577.1"/>
</dbReference>
<dbReference type="SMR" id="Q318K0"/>
<dbReference type="STRING" id="74546.PMT9312_1634"/>
<dbReference type="KEGG" id="pmi:PMT9312_1634"/>
<dbReference type="eggNOG" id="COG0098">
    <property type="taxonomic scope" value="Bacteria"/>
</dbReference>
<dbReference type="HOGENOM" id="CLU_065898_2_1_3"/>
<dbReference type="OrthoDB" id="9809045at2"/>
<dbReference type="Proteomes" id="UP000002715">
    <property type="component" value="Chromosome"/>
</dbReference>
<dbReference type="GO" id="GO:0015935">
    <property type="term" value="C:small ribosomal subunit"/>
    <property type="evidence" value="ECO:0007669"/>
    <property type="project" value="InterPro"/>
</dbReference>
<dbReference type="GO" id="GO:0019843">
    <property type="term" value="F:rRNA binding"/>
    <property type="evidence" value="ECO:0007669"/>
    <property type="project" value="UniProtKB-UniRule"/>
</dbReference>
<dbReference type="GO" id="GO:0003735">
    <property type="term" value="F:structural constituent of ribosome"/>
    <property type="evidence" value="ECO:0007669"/>
    <property type="project" value="InterPro"/>
</dbReference>
<dbReference type="GO" id="GO:0006412">
    <property type="term" value="P:translation"/>
    <property type="evidence" value="ECO:0007669"/>
    <property type="project" value="UniProtKB-UniRule"/>
</dbReference>
<dbReference type="FunFam" id="3.30.160.20:FF:000001">
    <property type="entry name" value="30S ribosomal protein S5"/>
    <property type="match status" value="1"/>
</dbReference>
<dbReference type="FunFam" id="3.30.230.10:FF:000002">
    <property type="entry name" value="30S ribosomal protein S5"/>
    <property type="match status" value="1"/>
</dbReference>
<dbReference type="Gene3D" id="3.30.160.20">
    <property type="match status" value="1"/>
</dbReference>
<dbReference type="Gene3D" id="3.30.230.10">
    <property type="match status" value="1"/>
</dbReference>
<dbReference type="HAMAP" id="MF_01307_B">
    <property type="entry name" value="Ribosomal_uS5_B"/>
    <property type="match status" value="1"/>
</dbReference>
<dbReference type="InterPro" id="IPR020568">
    <property type="entry name" value="Ribosomal_Su5_D2-typ_SF"/>
</dbReference>
<dbReference type="InterPro" id="IPR000851">
    <property type="entry name" value="Ribosomal_uS5"/>
</dbReference>
<dbReference type="InterPro" id="IPR005712">
    <property type="entry name" value="Ribosomal_uS5_bac-type"/>
</dbReference>
<dbReference type="InterPro" id="IPR005324">
    <property type="entry name" value="Ribosomal_uS5_C"/>
</dbReference>
<dbReference type="InterPro" id="IPR013810">
    <property type="entry name" value="Ribosomal_uS5_N"/>
</dbReference>
<dbReference type="InterPro" id="IPR018192">
    <property type="entry name" value="Ribosomal_uS5_N_CS"/>
</dbReference>
<dbReference type="InterPro" id="IPR014721">
    <property type="entry name" value="Ribsml_uS5_D2-typ_fold_subgr"/>
</dbReference>
<dbReference type="NCBIfam" id="TIGR01021">
    <property type="entry name" value="rpsE_bact"/>
    <property type="match status" value="1"/>
</dbReference>
<dbReference type="PANTHER" id="PTHR48277">
    <property type="entry name" value="MITOCHONDRIAL RIBOSOMAL PROTEIN S5"/>
    <property type="match status" value="1"/>
</dbReference>
<dbReference type="PANTHER" id="PTHR48277:SF1">
    <property type="entry name" value="MITOCHONDRIAL RIBOSOMAL PROTEIN S5"/>
    <property type="match status" value="1"/>
</dbReference>
<dbReference type="Pfam" id="PF00333">
    <property type="entry name" value="Ribosomal_S5"/>
    <property type="match status" value="1"/>
</dbReference>
<dbReference type="Pfam" id="PF03719">
    <property type="entry name" value="Ribosomal_S5_C"/>
    <property type="match status" value="1"/>
</dbReference>
<dbReference type="SUPFAM" id="SSF54768">
    <property type="entry name" value="dsRNA-binding domain-like"/>
    <property type="match status" value="1"/>
</dbReference>
<dbReference type="SUPFAM" id="SSF54211">
    <property type="entry name" value="Ribosomal protein S5 domain 2-like"/>
    <property type="match status" value="1"/>
</dbReference>
<dbReference type="PROSITE" id="PS00585">
    <property type="entry name" value="RIBOSOMAL_S5"/>
    <property type="match status" value="1"/>
</dbReference>
<dbReference type="PROSITE" id="PS50881">
    <property type="entry name" value="S5_DSRBD"/>
    <property type="match status" value="1"/>
</dbReference>
<comment type="function">
    <text evidence="1">With S4 and S12 plays an important role in translational accuracy.</text>
</comment>
<comment type="function">
    <text evidence="1">Located at the back of the 30S subunit body where it stabilizes the conformation of the head with respect to the body.</text>
</comment>
<comment type="subunit">
    <text evidence="1">Part of the 30S ribosomal subunit. Contacts proteins S4 and S8.</text>
</comment>
<comment type="domain">
    <text>The N-terminal domain interacts with the head of the 30S subunit; the C-terminal domain interacts with the body and contacts protein S4. The interaction surface between S4 and S5 is involved in control of translational fidelity.</text>
</comment>
<comment type="similarity">
    <text evidence="1">Belongs to the universal ribosomal protein uS5 family.</text>
</comment>
<accession>Q318K0</accession>
<gene>
    <name evidence="1" type="primary">rpsE</name>
    <name evidence="1" type="synonym">rps5</name>
    <name type="ordered locus">PMT9312_1634</name>
</gene>
<protein>
    <recommendedName>
        <fullName evidence="1">Small ribosomal subunit protein uS5</fullName>
    </recommendedName>
    <alternativeName>
        <fullName evidence="3">30S ribosomal protein S5</fullName>
    </alternativeName>
</protein>
<reference key="1">
    <citation type="journal article" date="2006" name="Science">
        <title>Genomic islands and the ecology and evolution of Prochlorococcus.</title>
        <authorList>
            <person name="Coleman M.L."/>
            <person name="Sullivan M.B."/>
            <person name="Martiny A.C."/>
            <person name="Steglich C."/>
            <person name="Barry K."/>
            <person name="Delong E.F."/>
            <person name="Chisholm S.W."/>
        </authorList>
    </citation>
    <scope>NUCLEOTIDE SEQUENCE [LARGE SCALE GENOMIC DNA]</scope>
    <source>
        <strain>MIT 9312</strain>
    </source>
</reference>
<evidence type="ECO:0000255" key="1">
    <source>
        <dbReference type="HAMAP-Rule" id="MF_01307"/>
    </source>
</evidence>
<evidence type="ECO:0000256" key="2">
    <source>
        <dbReference type="SAM" id="MobiDB-lite"/>
    </source>
</evidence>
<evidence type="ECO:0000305" key="3"/>
<keyword id="KW-0687">Ribonucleoprotein</keyword>
<keyword id="KW-0689">Ribosomal protein</keyword>
<keyword id="KW-0694">RNA-binding</keyword>
<keyword id="KW-0699">rRNA-binding</keyword>